<dbReference type="EMBL" id="X70800">
    <property type="protein sequence ID" value="CAA50070.1"/>
    <property type="molecule type" value="mRNA"/>
</dbReference>
<dbReference type="CCDS" id="CCDS21475.1"/>
<dbReference type="PIR" id="S34378">
    <property type="entry name" value="S34378"/>
</dbReference>
<dbReference type="RefSeq" id="NP_001272721.1">
    <property type="nucleotide sequence ID" value="NM_001285792.1"/>
</dbReference>
<dbReference type="RefSeq" id="NP_033545.1">
    <property type="nucleotide sequence ID" value="NM_009519.2"/>
</dbReference>
<dbReference type="RefSeq" id="XP_006507649.1">
    <property type="nucleotide sequence ID" value="XM_006507586.5"/>
</dbReference>
<dbReference type="SMR" id="P48615"/>
<dbReference type="BioGRID" id="204570">
    <property type="interactions" value="3"/>
</dbReference>
<dbReference type="FunCoup" id="P48615">
    <property type="interactions" value="542"/>
</dbReference>
<dbReference type="STRING" id="10090.ENSMUSP00000064333"/>
<dbReference type="GlyCosmos" id="P48615">
    <property type="glycosylation" value="5 sites, No reported glycans"/>
</dbReference>
<dbReference type="GlyGen" id="P48615">
    <property type="glycosylation" value="5 sites"/>
</dbReference>
<dbReference type="PhosphoSitePlus" id="P48615"/>
<dbReference type="PaxDb" id="10090-ENSMUSP00000132166"/>
<dbReference type="ProteomicsDB" id="297852"/>
<dbReference type="Antibodypedia" id="31189">
    <property type="antibodies" value="136 antibodies from 31 providers"/>
</dbReference>
<dbReference type="DNASU" id="22411"/>
<dbReference type="Ensembl" id="ENSMUST00000067495.9">
    <property type="protein sequence ID" value="ENSMUSP00000064333.3"/>
    <property type="gene ID" value="ENSMUSG00000015957.13"/>
</dbReference>
<dbReference type="Ensembl" id="ENSMUST00000167303.8">
    <property type="protein sequence ID" value="ENSMUSP00000132166.2"/>
    <property type="gene ID" value="ENSMUSG00000015957.13"/>
</dbReference>
<dbReference type="GeneID" id="22411"/>
<dbReference type="KEGG" id="mmu:22411"/>
<dbReference type="UCSC" id="uc009ikv.3">
    <property type="organism name" value="mouse"/>
</dbReference>
<dbReference type="AGR" id="MGI:101948"/>
<dbReference type="CTD" id="7481"/>
<dbReference type="MGI" id="MGI:101948">
    <property type="gene designation" value="Wnt11"/>
</dbReference>
<dbReference type="VEuPathDB" id="HostDB:ENSMUSG00000015957"/>
<dbReference type="eggNOG" id="KOG3913">
    <property type="taxonomic scope" value="Eukaryota"/>
</dbReference>
<dbReference type="GeneTree" id="ENSGT00940000158413"/>
<dbReference type="HOGENOM" id="CLU_033039_1_0_1"/>
<dbReference type="InParanoid" id="P48615"/>
<dbReference type="OMA" id="CKLLPGM"/>
<dbReference type="OrthoDB" id="5945655at2759"/>
<dbReference type="PhylomeDB" id="P48615"/>
<dbReference type="TreeFam" id="TF105310"/>
<dbReference type="Reactome" id="R-MMU-3238698">
    <property type="pathway name" value="WNT ligand biogenesis and trafficking"/>
</dbReference>
<dbReference type="Reactome" id="R-MMU-4086398">
    <property type="pathway name" value="Ca2+ pathway"/>
</dbReference>
<dbReference type="Reactome" id="R-MMU-4086400">
    <property type="pathway name" value="PCP/CE pathway"/>
</dbReference>
<dbReference type="BioGRID-ORCS" id="22411">
    <property type="hits" value="1 hit in 79 CRISPR screens"/>
</dbReference>
<dbReference type="PRO" id="PR:P48615"/>
<dbReference type="Proteomes" id="UP000000589">
    <property type="component" value="Chromosome 7"/>
</dbReference>
<dbReference type="RNAct" id="P48615">
    <property type="molecule type" value="protein"/>
</dbReference>
<dbReference type="Bgee" id="ENSMUSG00000015957">
    <property type="expression patterns" value="Expressed in mesenchyme from somatopleure and 223 other cell types or tissues"/>
</dbReference>
<dbReference type="ExpressionAtlas" id="P48615">
    <property type="expression patterns" value="baseline and differential"/>
</dbReference>
<dbReference type="GO" id="GO:0005737">
    <property type="term" value="C:cytoplasm"/>
    <property type="evidence" value="ECO:0000250"/>
    <property type="project" value="UniProtKB"/>
</dbReference>
<dbReference type="GO" id="GO:0031012">
    <property type="term" value="C:extracellular matrix"/>
    <property type="evidence" value="ECO:0000314"/>
    <property type="project" value="MGI"/>
</dbReference>
<dbReference type="GO" id="GO:0005576">
    <property type="term" value="C:extracellular region"/>
    <property type="evidence" value="ECO:0000314"/>
    <property type="project" value="MGI"/>
</dbReference>
<dbReference type="GO" id="GO:0030295">
    <property type="term" value="F:protein kinase activator activity"/>
    <property type="evidence" value="ECO:0007669"/>
    <property type="project" value="Ensembl"/>
</dbReference>
<dbReference type="GO" id="GO:0005102">
    <property type="term" value="F:signaling receptor binding"/>
    <property type="evidence" value="ECO:0000304"/>
    <property type="project" value="MGI"/>
</dbReference>
<dbReference type="GO" id="GO:0030325">
    <property type="term" value="P:adrenal gland development"/>
    <property type="evidence" value="ECO:0007669"/>
    <property type="project" value="Ensembl"/>
</dbReference>
<dbReference type="GO" id="GO:0009887">
    <property type="term" value="P:animal organ morphogenesis"/>
    <property type="evidence" value="ECO:0000304"/>
    <property type="project" value="MGI"/>
</dbReference>
<dbReference type="GO" id="GO:0006915">
    <property type="term" value="P:apoptotic process"/>
    <property type="evidence" value="ECO:0000315"/>
    <property type="project" value="MGI"/>
</dbReference>
<dbReference type="GO" id="GO:0048844">
    <property type="term" value="P:artery morphogenesis"/>
    <property type="evidence" value="ECO:0000315"/>
    <property type="project" value="MGI"/>
</dbReference>
<dbReference type="GO" id="GO:0003283">
    <property type="term" value="P:atrial septum development"/>
    <property type="evidence" value="ECO:0000316"/>
    <property type="project" value="CACAO"/>
</dbReference>
<dbReference type="GO" id="GO:0070830">
    <property type="term" value="P:bicellular tight junction assembly"/>
    <property type="evidence" value="ECO:0000315"/>
    <property type="project" value="MGI"/>
</dbReference>
<dbReference type="GO" id="GO:0030282">
    <property type="term" value="P:bone mineralization"/>
    <property type="evidence" value="ECO:0000316"/>
    <property type="project" value="MGI"/>
</dbReference>
<dbReference type="GO" id="GO:0060070">
    <property type="term" value="P:canonical Wnt signaling pathway"/>
    <property type="evidence" value="ECO:0000314"/>
    <property type="project" value="MGI"/>
</dbReference>
<dbReference type="GO" id="GO:0007267">
    <property type="term" value="P:cell-cell signaling"/>
    <property type="evidence" value="ECO:0000304"/>
    <property type="project" value="MGI"/>
</dbReference>
<dbReference type="GO" id="GO:0071260">
    <property type="term" value="P:cellular response to mechanical stimulus"/>
    <property type="evidence" value="ECO:0000314"/>
    <property type="project" value="MGI"/>
</dbReference>
<dbReference type="GO" id="GO:0060197">
    <property type="term" value="P:cloacal septation"/>
    <property type="evidence" value="ECO:0007669"/>
    <property type="project" value="Ensembl"/>
</dbReference>
<dbReference type="GO" id="GO:0060028">
    <property type="term" value="P:convergent extension involved in axis elongation"/>
    <property type="evidence" value="ECO:0000316"/>
    <property type="project" value="MGI"/>
</dbReference>
<dbReference type="GO" id="GO:0048706">
    <property type="term" value="P:embryonic skeletal system development"/>
    <property type="evidence" value="ECO:0007669"/>
    <property type="project" value="Ensembl"/>
</dbReference>
<dbReference type="GO" id="GO:1904019">
    <property type="term" value="P:epithelial cell apoptotic process"/>
    <property type="evidence" value="ECO:0000315"/>
    <property type="project" value="MGI"/>
</dbReference>
<dbReference type="GO" id="GO:0001837">
    <property type="term" value="P:epithelial to mesenchymal transition"/>
    <property type="evidence" value="ECO:0000316"/>
    <property type="project" value="MGI"/>
</dbReference>
<dbReference type="GO" id="GO:0035556">
    <property type="term" value="P:intracellular signal transduction"/>
    <property type="evidence" value="ECO:0000250"/>
    <property type="project" value="UniProtKB"/>
</dbReference>
<dbReference type="GO" id="GO:0001822">
    <property type="term" value="P:kidney development"/>
    <property type="evidence" value="ECO:0000314"/>
    <property type="project" value="MGI"/>
</dbReference>
<dbReference type="GO" id="GO:0060484">
    <property type="term" value="P:lung-associated mesenchyme development"/>
    <property type="evidence" value="ECO:0007669"/>
    <property type="project" value="Ensembl"/>
</dbReference>
<dbReference type="GO" id="GO:0045199">
    <property type="term" value="P:maintenance of epithelial cell apical/basal polarity"/>
    <property type="evidence" value="ECO:0000316"/>
    <property type="project" value="MGI"/>
</dbReference>
<dbReference type="GO" id="GO:0010463">
    <property type="term" value="P:mesenchymal cell proliferation"/>
    <property type="evidence" value="ECO:0000315"/>
    <property type="project" value="MGI"/>
</dbReference>
<dbReference type="GO" id="GO:0072177">
    <property type="term" value="P:mesonephric duct development"/>
    <property type="evidence" value="ECO:0007669"/>
    <property type="project" value="Ensembl"/>
</dbReference>
<dbReference type="GO" id="GO:0090090">
    <property type="term" value="P:negative regulation of canonical Wnt signaling pathway"/>
    <property type="evidence" value="ECO:0000314"/>
    <property type="project" value="MGI"/>
</dbReference>
<dbReference type="GO" id="GO:0090272">
    <property type="term" value="P:negative regulation of fibroblast growth factor production"/>
    <property type="evidence" value="ECO:0000315"/>
    <property type="project" value="MGI"/>
</dbReference>
<dbReference type="GO" id="GO:0072201">
    <property type="term" value="P:negative regulation of mesenchymal cell proliferation"/>
    <property type="evidence" value="ECO:0000315"/>
    <property type="project" value="MGI"/>
</dbReference>
<dbReference type="GO" id="GO:2000647">
    <property type="term" value="P:negative regulation of stem cell proliferation"/>
    <property type="evidence" value="ECO:0000315"/>
    <property type="project" value="MGI"/>
</dbReference>
<dbReference type="GO" id="GO:0061101">
    <property type="term" value="P:neuroendocrine cell differentiation"/>
    <property type="evidence" value="ECO:0000250"/>
    <property type="project" value="UniProtKB"/>
</dbReference>
<dbReference type="GO" id="GO:0035567">
    <property type="term" value="P:non-canonical Wnt signaling pathway"/>
    <property type="evidence" value="ECO:0000315"/>
    <property type="project" value="MGI"/>
</dbReference>
<dbReference type="GO" id="GO:0048570">
    <property type="term" value="P:notochord morphogenesis"/>
    <property type="evidence" value="ECO:0000316"/>
    <property type="project" value="MGI"/>
</dbReference>
<dbReference type="GO" id="GO:0001649">
    <property type="term" value="P:osteoblast differentiation"/>
    <property type="evidence" value="ECO:0000316"/>
    <property type="project" value="MGI"/>
</dbReference>
<dbReference type="GO" id="GO:0003151">
    <property type="term" value="P:outflow tract morphogenesis"/>
    <property type="evidence" value="ECO:0000315"/>
    <property type="project" value="MGI"/>
</dbReference>
<dbReference type="GO" id="GO:0048341">
    <property type="term" value="P:paraxial mesoderm formation"/>
    <property type="evidence" value="ECO:0000316"/>
    <property type="project" value="MGI"/>
</dbReference>
<dbReference type="GO" id="GO:0043065">
    <property type="term" value="P:positive regulation of apoptotic process"/>
    <property type="evidence" value="ECO:0000315"/>
    <property type="project" value="MGI"/>
</dbReference>
<dbReference type="GO" id="GO:0045893">
    <property type="term" value="P:positive regulation of DNA-templated transcription"/>
    <property type="evidence" value="ECO:0000250"/>
    <property type="project" value="UniProtKB"/>
</dbReference>
<dbReference type="GO" id="GO:1904037">
    <property type="term" value="P:positive regulation of epithelial cell apoptotic process"/>
    <property type="evidence" value="ECO:0000315"/>
    <property type="project" value="MGI"/>
</dbReference>
<dbReference type="GO" id="GO:0032915">
    <property type="term" value="P:positive regulation of transforming growth factor beta2 production"/>
    <property type="evidence" value="ECO:0000315"/>
    <property type="project" value="MGI"/>
</dbReference>
<dbReference type="GO" id="GO:0003138">
    <property type="term" value="P:primary heart field specification"/>
    <property type="evidence" value="ECO:0000316"/>
    <property type="project" value="CACAO"/>
</dbReference>
<dbReference type="GO" id="GO:0031667">
    <property type="term" value="P:response to nutrient levels"/>
    <property type="evidence" value="ECO:0007669"/>
    <property type="project" value="Ensembl"/>
</dbReference>
<dbReference type="GO" id="GO:0060021">
    <property type="term" value="P:roof of mouth development"/>
    <property type="evidence" value="ECO:0000315"/>
    <property type="project" value="MGI"/>
</dbReference>
<dbReference type="GO" id="GO:0003139">
    <property type="term" value="P:secondary heart field specification"/>
    <property type="evidence" value="ECO:0000316"/>
    <property type="project" value="CACAO"/>
</dbReference>
<dbReference type="GO" id="GO:0062009">
    <property type="term" value="P:secondary palate development"/>
    <property type="evidence" value="ECO:0000250"/>
    <property type="project" value="UniProtKB"/>
</dbReference>
<dbReference type="GO" id="GO:0007165">
    <property type="term" value="P:signal transduction"/>
    <property type="evidence" value="ECO:0000250"/>
    <property type="project" value="UniProtKB"/>
</dbReference>
<dbReference type="GO" id="GO:0061053">
    <property type="term" value="P:somite development"/>
    <property type="evidence" value="ECO:0000316"/>
    <property type="project" value="MGI"/>
</dbReference>
<dbReference type="GO" id="GO:0072089">
    <property type="term" value="P:stem cell proliferation"/>
    <property type="evidence" value="ECO:0000315"/>
    <property type="project" value="MGI"/>
</dbReference>
<dbReference type="GO" id="GO:0060675">
    <property type="term" value="P:ureteric bud morphogenesis"/>
    <property type="evidence" value="ECO:0007669"/>
    <property type="project" value="Ensembl"/>
</dbReference>
<dbReference type="GO" id="GO:0003281">
    <property type="term" value="P:ventricular septum development"/>
    <property type="evidence" value="ECO:0000316"/>
    <property type="project" value="CACAO"/>
</dbReference>
<dbReference type="GO" id="GO:0060412">
    <property type="term" value="P:ventricular septum morphogenesis"/>
    <property type="evidence" value="ECO:0000315"/>
    <property type="project" value="MGI"/>
</dbReference>
<dbReference type="CDD" id="cd19343">
    <property type="entry name" value="Wnt_Wnt11"/>
    <property type="match status" value="1"/>
</dbReference>
<dbReference type="FunFam" id="3.30.2460.20:FF:000001">
    <property type="entry name" value="Wnt homolog"/>
    <property type="match status" value="1"/>
</dbReference>
<dbReference type="Gene3D" id="3.30.2460.20">
    <property type="match status" value="1"/>
</dbReference>
<dbReference type="InterPro" id="IPR005817">
    <property type="entry name" value="Wnt"/>
</dbReference>
<dbReference type="InterPro" id="IPR043158">
    <property type="entry name" value="Wnt_C"/>
</dbReference>
<dbReference type="InterPro" id="IPR018161">
    <property type="entry name" value="Wnt_CS"/>
</dbReference>
<dbReference type="PANTHER" id="PTHR12027:SF7">
    <property type="entry name" value="PROTEIN WNT-11"/>
    <property type="match status" value="1"/>
</dbReference>
<dbReference type="PANTHER" id="PTHR12027">
    <property type="entry name" value="WNT RELATED"/>
    <property type="match status" value="1"/>
</dbReference>
<dbReference type="Pfam" id="PF00110">
    <property type="entry name" value="wnt"/>
    <property type="match status" value="1"/>
</dbReference>
<dbReference type="PRINTS" id="PR01349">
    <property type="entry name" value="WNTPROTEIN"/>
</dbReference>
<dbReference type="SMART" id="SM00097">
    <property type="entry name" value="WNT1"/>
    <property type="match status" value="1"/>
</dbReference>
<dbReference type="PROSITE" id="PS00246">
    <property type="entry name" value="WNT1"/>
    <property type="match status" value="1"/>
</dbReference>
<reference key="1">
    <citation type="journal article" date="1995" name="Mech. Dev.">
        <title>Murine Wnt-11 and Wnt-12 have temporally and spatially restricted expression patterns during embryonic development.</title>
        <authorList>
            <person name="Christiansen J.H."/>
            <person name="Dennis C.L."/>
            <person name="Wicking C.A."/>
            <person name="Monkley S.J."/>
            <person name="Wilkinson D.G."/>
            <person name="Wainwright B.J."/>
        </authorList>
    </citation>
    <scope>NUCLEOTIDE SEQUENCE [MRNA]</scope>
    <source>
        <strain>SWR/J</strain>
    </source>
</reference>
<organism>
    <name type="scientific">Mus musculus</name>
    <name type="common">Mouse</name>
    <dbReference type="NCBI Taxonomy" id="10090"/>
    <lineage>
        <taxon>Eukaryota</taxon>
        <taxon>Metazoa</taxon>
        <taxon>Chordata</taxon>
        <taxon>Craniata</taxon>
        <taxon>Vertebrata</taxon>
        <taxon>Euteleostomi</taxon>
        <taxon>Mammalia</taxon>
        <taxon>Eutheria</taxon>
        <taxon>Euarchontoglires</taxon>
        <taxon>Glires</taxon>
        <taxon>Rodentia</taxon>
        <taxon>Myomorpha</taxon>
        <taxon>Muroidea</taxon>
        <taxon>Muridae</taxon>
        <taxon>Murinae</taxon>
        <taxon>Mus</taxon>
        <taxon>Mus</taxon>
    </lineage>
</organism>
<feature type="signal peptide" evidence="4">
    <location>
        <begin position="1"/>
        <end position="24"/>
    </location>
</feature>
<feature type="chain" id="PRO_0000041466" description="Protein Wnt-11">
    <location>
        <begin position="25"/>
        <end position="354"/>
    </location>
</feature>
<feature type="lipid moiety-binding region" description="O-palmitoleoyl serine; by PORCN" evidence="3">
    <location>
        <position position="215"/>
    </location>
</feature>
<feature type="glycosylation site" description="N-linked (GlcNAc...) asparagine" evidence="4">
    <location>
        <position position="40"/>
    </location>
</feature>
<feature type="glycosylation site" description="N-linked (GlcNAc...) asparagine" evidence="4">
    <location>
        <position position="90"/>
    </location>
</feature>
<feature type="glycosylation site" description="N-linked (GlcNAc...) asparagine" evidence="4">
    <location>
        <position position="160"/>
    </location>
</feature>
<feature type="glycosylation site" description="N-linked (GlcNAc...) asparagine" evidence="4">
    <location>
        <position position="300"/>
    </location>
</feature>
<feature type="glycosylation site" description="N-linked (GlcNAc...) asparagine" evidence="4">
    <location>
        <position position="304"/>
    </location>
</feature>
<feature type="disulfide bond" evidence="2">
    <location>
        <begin position="80"/>
        <end position="91"/>
    </location>
</feature>
<feature type="disulfide bond" evidence="2">
    <location>
        <begin position="130"/>
        <end position="138"/>
    </location>
</feature>
<feature type="disulfide bond" evidence="2">
    <location>
        <begin position="140"/>
        <end position="157"/>
    </location>
</feature>
<feature type="disulfide bond" evidence="2">
    <location>
        <begin position="209"/>
        <end position="223"/>
    </location>
</feature>
<feature type="disulfide bond" evidence="2">
    <location>
        <begin position="211"/>
        <end position="218"/>
    </location>
</feature>
<feature type="disulfide bond" evidence="2">
    <location>
        <begin position="283"/>
        <end position="314"/>
    </location>
</feature>
<feature type="disulfide bond" evidence="2">
    <location>
        <begin position="299"/>
        <end position="309"/>
    </location>
</feature>
<feature type="disulfide bond" evidence="2">
    <location>
        <begin position="313"/>
        <end position="353"/>
    </location>
</feature>
<feature type="disulfide bond" evidence="2">
    <location>
        <begin position="329"/>
        <end position="344"/>
    </location>
</feature>
<feature type="disulfide bond" evidence="2">
    <location>
        <begin position="331"/>
        <end position="341"/>
    </location>
</feature>
<feature type="disulfide bond" evidence="2">
    <location>
        <begin position="336"/>
        <end position="337"/>
    </location>
</feature>
<keyword id="KW-0217">Developmental protein</keyword>
<keyword id="KW-1015">Disulfide bond</keyword>
<keyword id="KW-0272">Extracellular matrix</keyword>
<keyword id="KW-0325">Glycoprotein</keyword>
<keyword id="KW-0449">Lipoprotein</keyword>
<keyword id="KW-1185">Reference proteome</keyword>
<keyword id="KW-0964">Secreted</keyword>
<keyword id="KW-0732">Signal</keyword>
<keyword id="KW-0879">Wnt signaling pathway</keyword>
<evidence type="ECO:0000250" key="1">
    <source>
        <dbReference type="UniProtKB" id="P27467"/>
    </source>
</evidence>
<evidence type="ECO:0000250" key="2">
    <source>
        <dbReference type="UniProtKB" id="P28026"/>
    </source>
</evidence>
<evidence type="ECO:0000250" key="3">
    <source>
        <dbReference type="UniProtKB" id="P56704"/>
    </source>
</evidence>
<evidence type="ECO:0000255" key="4"/>
<evidence type="ECO:0000305" key="5"/>
<gene>
    <name type="primary">Wnt11</name>
    <name type="synonym">Wnt-11</name>
</gene>
<sequence>MRARPQVCEALLFALALHTGVCYGIKWLALSKTPAALALNQTQHCKQLEGLVSAQVQLCRSNLELMRTIVHAARGAMKACRRAFADMRWNCSSIELAPNYLLDLERGTRESAFVYALSAATISHTIARACTSGDLPGCSCGPVPGEPPGPGNRWGGCADNLSYGLLMGAKFSDAPMKVKKTGSQANKLMRLHNSEVGRQALRASLETKCKCHGVSGSCSIRTCWKGLQELQDVAADLKTRYLSATKVVHRPMGTRKHLVPKDLDIRPVKDSELVYLQSSPDFCMKNEKVGSHGTQDRQCNKTSNGSDSCDLMCCGRGYNPYTDRVVERCHCKYHWCCYVTCRRCERTVERYVCK</sequence>
<protein>
    <recommendedName>
        <fullName>Protein Wnt-11</fullName>
    </recommendedName>
</protein>
<name>WNT11_MOUSE</name>
<proteinExistence type="evidence at transcript level"/>
<comment type="function">
    <text>Ligand for members of the frizzled family of seven transmembrane receptors. Probable developmental protein. May be a signaling molecule which affects the development of discrete regions of tissues. Is likely to signal over only few cell diameters.</text>
</comment>
<comment type="subcellular location">
    <subcellularLocation>
        <location>Secreted</location>
        <location>Extracellular space</location>
        <location>Extracellular matrix</location>
    </subcellularLocation>
</comment>
<comment type="developmental stage">
    <text>Expressed during embryogenesis.</text>
</comment>
<comment type="PTM">
    <text evidence="1 3">Palmitoleoylation is required for efficient binding to frizzled receptors. Depalmitoleoylation leads to Wnt signaling pathway inhibition.</text>
</comment>
<comment type="similarity">
    <text evidence="5">Belongs to the Wnt family.</text>
</comment>
<accession>P48615</accession>